<dbReference type="EMBL" id="CP000230">
    <property type="protein sequence ID" value="ABC23471.1"/>
    <property type="molecule type" value="Genomic_DNA"/>
</dbReference>
<dbReference type="RefSeq" id="WP_011390424.1">
    <property type="nucleotide sequence ID" value="NC_007643.1"/>
</dbReference>
<dbReference type="RefSeq" id="YP_427758.1">
    <property type="nucleotide sequence ID" value="NC_007643.1"/>
</dbReference>
<dbReference type="SMR" id="Q2RQX4"/>
<dbReference type="STRING" id="269796.Rru_A2674"/>
<dbReference type="EnsemblBacteria" id="ABC23471">
    <property type="protein sequence ID" value="ABC23471"/>
    <property type="gene ID" value="Rru_A2674"/>
</dbReference>
<dbReference type="KEGG" id="rru:Rru_A2674"/>
<dbReference type="PATRIC" id="fig|269796.9.peg.2781"/>
<dbReference type="eggNOG" id="COG0096">
    <property type="taxonomic scope" value="Bacteria"/>
</dbReference>
<dbReference type="HOGENOM" id="CLU_098428_0_0_5"/>
<dbReference type="PhylomeDB" id="Q2RQX4"/>
<dbReference type="Proteomes" id="UP000001929">
    <property type="component" value="Chromosome"/>
</dbReference>
<dbReference type="GO" id="GO:1990904">
    <property type="term" value="C:ribonucleoprotein complex"/>
    <property type="evidence" value="ECO:0007669"/>
    <property type="project" value="UniProtKB-KW"/>
</dbReference>
<dbReference type="GO" id="GO:0005840">
    <property type="term" value="C:ribosome"/>
    <property type="evidence" value="ECO:0007669"/>
    <property type="project" value="UniProtKB-KW"/>
</dbReference>
<dbReference type="GO" id="GO:0019843">
    <property type="term" value="F:rRNA binding"/>
    <property type="evidence" value="ECO:0007669"/>
    <property type="project" value="UniProtKB-UniRule"/>
</dbReference>
<dbReference type="GO" id="GO:0003735">
    <property type="term" value="F:structural constituent of ribosome"/>
    <property type="evidence" value="ECO:0007669"/>
    <property type="project" value="InterPro"/>
</dbReference>
<dbReference type="GO" id="GO:0006412">
    <property type="term" value="P:translation"/>
    <property type="evidence" value="ECO:0007669"/>
    <property type="project" value="UniProtKB-UniRule"/>
</dbReference>
<dbReference type="FunFam" id="3.30.1370.30:FF:000002">
    <property type="entry name" value="30S ribosomal protein S8"/>
    <property type="match status" value="1"/>
</dbReference>
<dbReference type="FunFam" id="3.30.1490.10:FF:000001">
    <property type="entry name" value="30S ribosomal protein S8"/>
    <property type="match status" value="1"/>
</dbReference>
<dbReference type="Gene3D" id="3.30.1370.30">
    <property type="match status" value="1"/>
</dbReference>
<dbReference type="Gene3D" id="3.30.1490.10">
    <property type="match status" value="1"/>
</dbReference>
<dbReference type="HAMAP" id="MF_01302_B">
    <property type="entry name" value="Ribosomal_uS8_B"/>
    <property type="match status" value="1"/>
</dbReference>
<dbReference type="InterPro" id="IPR000630">
    <property type="entry name" value="Ribosomal_uS8"/>
</dbReference>
<dbReference type="InterPro" id="IPR047863">
    <property type="entry name" value="Ribosomal_uS8_CS"/>
</dbReference>
<dbReference type="InterPro" id="IPR035987">
    <property type="entry name" value="Ribosomal_uS8_sf"/>
</dbReference>
<dbReference type="NCBIfam" id="NF001109">
    <property type="entry name" value="PRK00136.1"/>
    <property type="match status" value="1"/>
</dbReference>
<dbReference type="PANTHER" id="PTHR11758">
    <property type="entry name" value="40S RIBOSOMAL PROTEIN S15A"/>
    <property type="match status" value="1"/>
</dbReference>
<dbReference type="Pfam" id="PF00410">
    <property type="entry name" value="Ribosomal_S8"/>
    <property type="match status" value="1"/>
</dbReference>
<dbReference type="SUPFAM" id="SSF56047">
    <property type="entry name" value="Ribosomal protein S8"/>
    <property type="match status" value="1"/>
</dbReference>
<dbReference type="PROSITE" id="PS00053">
    <property type="entry name" value="RIBOSOMAL_S8"/>
    <property type="match status" value="1"/>
</dbReference>
<comment type="function">
    <text evidence="1">One of the primary rRNA binding proteins, it binds directly to 16S rRNA central domain where it helps coordinate assembly of the platform of the 30S subunit.</text>
</comment>
<comment type="subunit">
    <text evidence="1">Part of the 30S ribosomal subunit. Contacts proteins S5 and S12.</text>
</comment>
<comment type="similarity">
    <text evidence="1">Belongs to the universal ribosomal protein uS8 family.</text>
</comment>
<sequence>MALSDPIGDMLTRIRNGQRARKSSVMAPASTMRANVLDVLIREGYIRGYEKVDVRKGIAELRVELKYHEGEPVIREIARVSTPGRRVYSKIKDLPKVYNGLGISILSTPRGVMSDHEARQANVGGEVLCRVF</sequence>
<protein>
    <recommendedName>
        <fullName evidence="1">Small ribosomal subunit protein uS8</fullName>
    </recommendedName>
    <alternativeName>
        <fullName evidence="2">30S ribosomal protein S8</fullName>
    </alternativeName>
</protein>
<gene>
    <name evidence="1" type="primary">rpsH</name>
    <name type="ordered locus">Rru_A2674</name>
</gene>
<evidence type="ECO:0000255" key="1">
    <source>
        <dbReference type="HAMAP-Rule" id="MF_01302"/>
    </source>
</evidence>
<evidence type="ECO:0000305" key="2"/>
<keyword id="KW-1185">Reference proteome</keyword>
<keyword id="KW-0687">Ribonucleoprotein</keyword>
<keyword id="KW-0689">Ribosomal protein</keyword>
<keyword id="KW-0694">RNA-binding</keyword>
<keyword id="KW-0699">rRNA-binding</keyword>
<feature type="chain" id="PRO_0000228866" description="Small ribosomal subunit protein uS8">
    <location>
        <begin position="1"/>
        <end position="132"/>
    </location>
</feature>
<accession>Q2RQX4</accession>
<name>RS8_RHORT</name>
<reference key="1">
    <citation type="journal article" date="2011" name="Stand. Genomic Sci.">
        <title>Complete genome sequence of Rhodospirillum rubrum type strain (S1).</title>
        <authorList>
            <person name="Munk A.C."/>
            <person name="Copeland A."/>
            <person name="Lucas S."/>
            <person name="Lapidus A."/>
            <person name="Del Rio T.G."/>
            <person name="Barry K."/>
            <person name="Detter J.C."/>
            <person name="Hammon N."/>
            <person name="Israni S."/>
            <person name="Pitluck S."/>
            <person name="Brettin T."/>
            <person name="Bruce D."/>
            <person name="Han C."/>
            <person name="Tapia R."/>
            <person name="Gilna P."/>
            <person name="Schmutz J."/>
            <person name="Larimer F."/>
            <person name="Land M."/>
            <person name="Kyrpides N.C."/>
            <person name="Mavromatis K."/>
            <person name="Richardson P."/>
            <person name="Rohde M."/>
            <person name="Goeker M."/>
            <person name="Klenk H.P."/>
            <person name="Zhang Y."/>
            <person name="Roberts G.P."/>
            <person name="Reslewic S."/>
            <person name="Schwartz D.C."/>
        </authorList>
    </citation>
    <scope>NUCLEOTIDE SEQUENCE [LARGE SCALE GENOMIC DNA]</scope>
    <source>
        <strain>ATCC 11170 / ATH 1.1.1 / DSM 467 / LMG 4362 / NCIMB 8255 / S1</strain>
    </source>
</reference>
<proteinExistence type="inferred from homology"/>
<organism>
    <name type="scientific">Rhodospirillum rubrum (strain ATCC 11170 / ATH 1.1.1 / DSM 467 / LMG 4362 / NCIMB 8255 / S1)</name>
    <dbReference type="NCBI Taxonomy" id="269796"/>
    <lineage>
        <taxon>Bacteria</taxon>
        <taxon>Pseudomonadati</taxon>
        <taxon>Pseudomonadota</taxon>
        <taxon>Alphaproteobacteria</taxon>
        <taxon>Rhodospirillales</taxon>
        <taxon>Rhodospirillaceae</taxon>
        <taxon>Rhodospirillum</taxon>
    </lineage>
</organism>